<sequence length="200" mass="20620">MITSIQGTLVSATPLQAIVEVAGFGYEVHIPVTTAERLPAAGAAVKLHTLVIYREDSQTLYGFASPAERDFFRLMIEHVTGVGPKMALSIMSRLALPSLESAIRMGDVASLAKCPGIGKKTAERLVVELRTKVGATGAAPGLATQPAAAASPGASAHRDAVAALVALGYRSADADEAVRRASLALGEAATTESLIKKALS</sequence>
<evidence type="ECO:0000255" key="1">
    <source>
        <dbReference type="HAMAP-Rule" id="MF_00031"/>
    </source>
</evidence>
<comment type="function">
    <text evidence="1">The RuvA-RuvB-RuvC complex processes Holliday junction (HJ) DNA during genetic recombination and DNA repair, while the RuvA-RuvB complex plays an important role in the rescue of blocked DNA replication forks via replication fork reversal (RFR). RuvA specifically binds to HJ cruciform DNA, conferring on it an open structure. The RuvB hexamer acts as an ATP-dependent pump, pulling dsDNA into and through the RuvAB complex. HJ branch migration allows RuvC to scan DNA until it finds its consensus sequence, where it cleaves and resolves the cruciform DNA.</text>
</comment>
<comment type="subunit">
    <text evidence="1">Homotetramer. Forms an RuvA(8)-RuvB(12)-Holliday junction (HJ) complex. HJ DNA is sandwiched between 2 RuvA tetramers; dsDNA enters through RuvA and exits via RuvB. An RuvB hexamer assembles on each DNA strand where it exits the tetramer. Each RuvB hexamer is contacted by two RuvA subunits (via domain III) on 2 adjacent RuvB subunits; this complex drives branch migration. In the full resolvosome a probable DNA-RuvA(4)-RuvB(12)-RuvC(2) complex forms which resolves the HJ.</text>
</comment>
<comment type="subcellular location">
    <subcellularLocation>
        <location evidence="1">Cytoplasm</location>
    </subcellularLocation>
</comment>
<comment type="domain">
    <text evidence="1">Has three domains with a flexible linker between the domains II and III and assumes an 'L' shape. Domain III is highly mobile and contacts RuvB.</text>
</comment>
<comment type="similarity">
    <text evidence="1">Belongs to the RuvA family.</text>
</comment>
<dbReference type="EMBL" id="CP001032">
    <property type="protein sequence ID" value="ACB76469.1"/>
    <property type="molecule type" value="Genomic_DNA"/>
</dbReference>
<dbReference type="RefSeq" id="WP_012375998.1">
    <property type="nucleotide sequence ID" value="NC_010571.1"/>
</dbReference>
<dbReference type="SMR" id="B1ZN17"/>
<dbReference type="STRING" id="452637.Oter_3189"/>
<dbReference type="KEGG" id="ote:Oter_3189"/>
<dbReference type="eggNOG" id="COG0632">
    <property type="taxonomic scope" value="Bacteria"/>
</dbReference>
<dbReference type="HOGENOM" id="CLU_087936_0_0_0"/>
<dbReference type="OrthoDB" id="5293449at2"/>
<dbReference type="Proteomes" id="UP000007013">
    <property type="component" value="Chromosome"/>
</dbReference>
<dbReference type="GO" id="GO:0005737">
    <property type="term" value="C:cytoplasm"/>
    <property type="evidence" value="ECO:0007669"/>
    <property type="project" value="UniProtKB-SubCell"/>
</dbReference>
<dbReference type="GO" id="GO:0009379">
    <property type="term" value="C:Holliday junction helicase complex"/>
    <property type="evidence" value="ECO:0007669"/>
    <property type="project" value="InterPro"/>
</dbReference>
<dbReference type="GO" id="GO:0048476">
    <property type="term" value="C:Holliday junction resolvase complex"/>
    <property type="evidence" value="ECO:0007669"/>
    <property type="project" value="UniProtKB-UniRule"/>
</dbReference>
<dbReference type="GO" id="GO:0005524">
    <property type="term" value="F:ATP binding"/>
    <property type="evidence" value="ECO:0007669"/>
    <property type="project" value="InterPro"/>
</dbReference>
<dbReference type="GO" id="GO:0000400">
    <property type="term" value="F:four-way junction DNA binding"/>
    <property type="evidence" value="ECO:0007669"/>
    <property type="project" value="UniProtKB-UniRule"/>
</dbReference>
<dbReference type="GO" id="GO:0009378">
    <property type="term" value="F:four-way junction helicase activity"/>
    <property type="evidence" value="ECO:0007669"/>
    <property type="project" value="InterPro"/>
</dbReference>
<dbReference type="GO" id="GO:0006310">
    <property type="term" value="P:DNA recombination"/>
    <property type="evidence" value="ECO:0007669"/>
    <property type="project" value="UniProtKB-UniRule"/>
</dbReference>
<dbReference type="GO" id="GO:0006281">
    <property type="term" value="P:DNA repair"/>
    <property type="evidence" value="ECO:0007669"/>
    <property type="project" value="UniProtKB-UniRule"/>
</dbReference>
<dbReference type="CDD" id="cd14332">
    <property type="entry name" value="UBA_RuvA_C"/>
    <property type="match status" value="1"/>
</dbReference>
<dbReference type="Gene3D" id="1.10.150.20">
    <property type="entry name" value="5' to 3' exonuclease, C-terminal subdomain"/>
    <property type="match status" value="1"/>
</dbReference>
<dbReference type="Gene3D" id="1.10.8.10">
    <property type="entry name" value="DNA helicase RuvA subunit, C-terminal domain"/>
    <property type="match status" value="1"/>
</dbReference>
<dbReference type="Gene3D" id="2.40.50.140">
    <property type="entry name" value="Nucleic acid-binding proteins"/>
    <property type="match status" value="1"/>
</dbReference>
<dbReference type="HAMAP" id="MF_00031">
    <property type="entry name" value="DNA_HJ_migration_RuvA"/>
    <property type="match status" value="1"/>
</dbReference>
<dbReference type="InterPro" id="IPR013849">
    <property type="entry name" value="DNA_helicase_Holl-junc_RuvA_I"/>
</dbReference>
<dbReference type="InterPro" id="IPR003583">
    <property type="entry name" value="Hlx-hairpin-Hlx_DNA-bd_motif"/>
</dbReference>
<dbReference type="InterPro" id="IPR012340">
    <property type="entry name" value="NA-bd_OB-fold"/>
</dbReference>
<dbReference type="InterPro" id="IPR000085">
    <property type="entry name" value="RuvA"/>
</dbReference>
<dbReference type="InterPro" id="IPR010994">
    <property type="entry name" value="RuvA_2-like"/>
</dbReference>
<dbReference type="InterPro" id="IPR011114">
    <property type="entry name" value="RuvA_C"/>
</dbReference>
<dbReference type="InterPro" id="IPR036267">
    <property type="entry name" value="RuvA_C_sf"/>
</dbReference>
<dbReference type="NCBIfam" id="TIGR00084">
    <property type="entry name" value="ruvA"/>
    <property type="match status" value="1"/>
</dbReference>
<dbReference type="Pfam" id="PF14520">
    <property type="entry name" value="HHH_5"/>
    <property type="match status" value="1"/>
</dbReference>
<dbReference type="Pfam" id="PF07499">
    <property type="entry name" value="RuvA_C"/>
    <property type="match status" value="1"/>
</dbReference>
<dbReference type="Pfam" id="PF01330">
    <property type="entry name" value="RuvA_N"/>
    <property type="match status" value="1"/>
</dbReference>
<dbReference type="SMART" id="SM00278">
    <property type="entry name" value="HhH1"/>
    <property type="match status" value="2"/>
</dbReference>
<dbReference type="SUPFAM" id="SSF46929">
    <property type="entry name" value="DNA helicase RuvA subunit, C-terminal domain"/>
    <property type="match status" value="1"/>
</dbReference>
<dbReference type="SUPFAM" id="SSF50249">
    <property type="entry name" value="Nucleic acid-binding proteins"/>
    <property type="match status" value="1"/>
</dbReference>
<dbReference type="SUPFAM" id="SSF47781">
    <property type="entry name" value="RuvA domain 2-like"/>
    <property type="match status" value="1"/>
</dbReference>
<accession>B1ZN17</accession>
<protein>
    <recommendedName>
        <fullName evidence="1">Holliday junction branch migration complex subunit RuvA</fullName>
    </recommendedName>
</protein>
<reference key="1">
    <citation type="journal article" date="2011" name="J. Bacteriol.">
        <title>Genome sequence of the verrucomicrobium Opitutus terrae PB90-1, an abundant inhabitant of rice paddy soil ecosystems.</title>
        <authorList>
            <person name="van Passel M.W."/>
            <person name="Kant R."/>
            <person name="Palva A."/>
            <person name="Copeland A."/>
            <person name="Lucas S."/>
            <person name="Lapidus A."/>
            <person name="Glavina del Rio T."/>
            <person name="Pitluck S."/>
            <person name="Goltsman E."/>
            <person name="Clum A."/>
            <person name="Sun H."/>
            <person name="Schmutz J."/>
            <person name="Larimer F.W."/>
            <person name="Land M.L."/>
            <person name="Hauser L."/>
            <person name="Kyrpides N."/>
            <person name="Mikhailova N."/>
            <person name="Richardson P.P."/>
            <person name="Janssen P.H."/>
            <person name="de Vos W.M."/>
            <person name="Smidt H."/>
        </authorList>
    </citation>
    <scope>NUCLEOTIDE SEQUENCE [LARGE SCALE GENOMIC DNA]</scope>
    <source>
        <strain>DSM 11246 / JCM 15787 / PB90-1</strain>
    </source>
</reference>
<proteinExistence type="inferred from homology"/>
<feature type="chain" id="PRO_1000090346" description="Holliday junction branch migration complex subunit RuvA">
    <location>
        <begin position="1"/>
        <end position="200"/>
    </location>
</feature>
<feature type="region of interest" description="Domain I" evidence="1">
    <location>
        <begin position="1"/>
        <end position="64"/>
    </location>
</feature>
<feature type="region of interest" description="Domain II" evidence="1">
    <location>
        <begin position="65"/>
        <end position="144"/>
    </location>
</feature>
<feature type="region of interest" description="Flexible linker" evidence="1">
    <location>
        <begin position="145"/>
        <end position="151"/>
    </location>
</feature>
<feature type="region of interest" description="Domain III" evidence="1">
    <location>
        <begin position="152"/>
        <end position="200"/>
    </location>
</feature>
<keyword id="KW-0963">Cytoplasm</keyword>
<keyword id="KW-0227">DNA damage</keyword>
<keyword id="KW-0233">DNA recombination</keyword>
<keyword id="KW-0234">DNA repair</keyword>
<keyword id="KW-0238">DNA-binding</keyword>
<keyword id="KW-1185">Reference proteome</keyword>
<gene>
    <name evidence="1" type="primary">ruvA</name>
    <name type="ordered locus">Oter_3189</name>
</gene>
<name>RUVA_OPITP</name>
<organism>
    <name type="scientific">Opitutus terrae (strain DSM 11246 / JCM 15787 / PB90-1)</name>
    <dbReference type="NCBI Taxonomy" id="452637"/>
    <lineage>
        <taxon>Bacteria</taxon>
        <taxon>Pseudomonadati</taxon>
        <taxon>Verrucomicrobiota</taxon>
        <taxon>Opitutia</taxon>
        <taxon>Opitutales</taxon>
        <taxon>Opitutaceae</taxon>
        <taxon>Opitutus</taxon>
    </lineage>
</organism>